<sequence>MFSPQSRLRHAVADTFAMVVYCSVVNMCIEVFLSGMSFEQSFYSRLVAIPVNILIAWPYGMYRDLFMRAARKVSPSGWIKNLADILAYVTFQSPVYVAILLVVGADWHQIMAAVSSNIVVSMLMGAVYGYFLDYCRRLFKVSRYQQVKA</sequence>
<comment type="function">
    <text evidence="1">Exports L-alanine.</text>
</comment>
<comment type="subcellular location">
    <subcellularLocation>
        <location evidence="1">Cell inner membrane</location>
        <topology evidence="1">Multi-pass membrane protein</topology>
    </subcellularLocation>
</comment>
<comment type="similarity">
    <text evidence="1">Belongs to the AlaE exporter family.</text>
</comment>
<name>ALAE_SHIFL</name>
<protein>
    <recommendedName>
        <fullName evidence="1">L-alanine exporter AlaE</fullName>
    </recommendedName>
</protein>
<reference key="1">
    <citation type="journal article" date="2002" name="Nucleic Acids Res.">
        <title>Genome sequence of Shigella flexneri 2a: insights into pathogenicity through comparison with genomes of Escherichia coli K12 and O157.</title>
        <authorList>
            <person name="Jin Q."/>
            <person name="Yuan Z."/>
            <person name="Xu J."/>
            <person name="Wang Y."/>
            <person name="Shen Y."/>
            <person name="Lu W."/>
            <person name="Wang J."/>
            <person name="Liu H."/>
            <person name="Yang J."/>
            <person name="Yang F."/>
            <person name="Zhang X."/>
            <person name="Zhang J."/>
            <person name="Yang G."/>
            <person name="Wu H."/>
            <person name="Qu D."/>
            <person name="Dong J."/>
            <person name="Sun L."/>
            <person name="Xue Y."/>
            <person name="Zhao A."/>
            <person name="Gao Y."/>
            <person name="Zhu J."/>
            <person name="Kan B."/>
            <person name="Ding K."/>
            <person name="Chen S."/>
            <person name="Cheng H."/>
            <person name="Yao Z."/>
            <person name="He B."/>
            <person name="Chen R."/>
            <person name="Ma D."/>
            <person name="Qiang B."/>
            <person name="Wen Y."/>
            <person name="Hou Y."/>
            <person name="Yu J."/>
        </authorList>
    </citation>
    <scope>NUCLEOTIDE SEQUENCE [LARGE SCALE GENOMIC DNA]</scope>
    <source>
        <strain>301 / Serotype 2a</strain>
    </source>
</reference>
<reference key="2">
    <citation type="journal article" date="2003" name="Infect. Immun.">
        <title>Complete genome sequence and comparative genomics of Shigella flexneri serotype 2a strain 2457T.</title>
        <authorList>
            <person name="Wei J."/>
            <person name="Goldberg M.B."/>
            <person name="Burland V."/>
            <person name="Venkatesan M.M."/>
            <person name="Deng W."/>
            <person name="Fournier G."/>
            <person name="Mayhew G.F."/>
            <person name="Plunkett G. III"/>
            <person name="Rose D.J."/>
            <person name="Darling A."/>
            <person name="Mau B."/>
            <person name="Perna N.T."/>
            <person name="Payne S.M."/>
            <person name="Runyen-Janecky L.J."/>
            <person name="Zhou S."/>
            <person name="Schwartz D.C."/>
            <person name="Blattner F.R."/>
        </authorList>
    </citation>
    <scope>NUCLEOTIDE SEQUENCE [LARGE SCALE GENOMIC DNA]</scope>
    <source>
        <strain>ATCC 700930 / 2457T / Serotype 2a</strain>
    </source>
</reference>
<evidence type="ECO:0000255" key="1">
    <source>
        <dbReference type="HAMAP-Rule" id="MF_00914"/>
    </source>
</evidence>
<dbReference type="EMBL" id="AE005674">
    <property type="protein sequence ID" value="AAN44191.1"/>
    <property type="molecule type" value="Genomic_DNA"/>
</dbReference>
<dbReference type="EMBL" id="AE014073">
    <property type="protein sequence ID" value="AAP18019.1"/>
    <property type="molecule type" value="Genomic_DNA"/>
</dbReference>
<dbReference type="RefSeq" id="NP_708484.1">
    <property type="nucleotide sequence ID" value="NC_004337.2"/>
</dbReference>
<dbReference type="RefSeq" id="WP_000492656.1">
    <property type="nucleotide sequence ID" value="NZ_WPGW01000014.1"/>
</dbReference>
<dbReference type="STRING" id="198214.SF2698"/>
<dbReference type="PaxDb" id="198214-SF2698"/>
<dbReference type="GeneID" id="1025707"/>
<dbReference type="GeneID" id="75205913"/>
<dbReference type="KEGG" id="sfl:SF2698"/>
<dbReference type="KEGG" id="sfx:S2884"/>
<dbReference type="PATRIC" id="fig|198214.7.peg.3213"/>
<dbReference type="HOGENOM" id="CLU_126493_0_0_6"/>
<dbReference type="Proteomes" id="UP000001006">
    <property type="component" value="Chromosome"/>
</dbReference>
<dbReference type="Proteomes" id="UP000002673">
    <property type="component" value="Chromosome"/>
</dbReference>
<dbReference type="GO" id="GO:0005886">
    <property type="term" value="C:plasma membrane"/>
    <property type="evidence" value="ECO:0007669"/>
    <property type="project" value="UniProtKB-SubCell"/>
</dbReference>
<dbReference type="GO" id="GO:0034639">
    <property type="term" value="F:L-amino acid efflux transmembrane transporter activity"/>
    <property type="evidence" value="ECO:0007669"/>
    <property type="project" value="UniProtKB-UniRule"/>
</dbReference>
<dbReference type="GO" id="GO:0032973">
    <property type="term" value="P:amino acid export across plasma membrane"/>
    <property type="evidence" value="ECO:0007669"/>
    <property type="project" value="UniProtKB-UniRule"/>
</dbReference>
<dbReference type="HAMAP" id="MF_00914">
    <property type="entry name" value="L_Ala_exporter"/>
    <property type="match status" value="1"/>
</dbReference>
<dbReference type="InterPro" id="IPR010574">
    <property type="entry name" value="Ala_export_AlaE"/>
</dbReference>
<dbReference type="Pfam" id="PF06610">
    <property type="entry name" value="AlaE"/>
    <property type="match status" value="1"/>
</dbReference>
<feature type="chain" id="PRO_0000169305" description="L-alanine exporter AlaE">
    <location>
        <begin position="1"/>
        <end position="149"/>
    </location>
</feature>
<feature type="transmembrane region" description="Helical" evidence="1">
    <location>
        <begin position="16"/>
        <end position="36"/>
    </location>
</feature>
<feature type="transmembrane region" description="Helical" evidence="1">
    <location>
        <begin position="46"/>
        <end position="66"/>
    </location>
</feature>
<feature type="transmembrane region" description="Helical" evidence="1">
    <location>
        <begin position="85"/>
        <end position="105"/>
    </location>
</feature>
<feature type="transmembrane region" description="Helical" evidence="1">
    <location>
        <begin position="112"/>
        <end position="132"/>
    </location>
</feature>
<gene>
    <name evidence="1" type="primary">alaE</name>
    <name type="ordered locus">SF2698</name>
    <name type="ordered locus">S2884</name>
</gene>
<organism>
    <name type="scientific">Shigella flexneri</name>
    <dbReference type="NCBI Taxonomy" id="623"/>
    <lineage>
        <taxon>Bacteria</taxon>
        <taxon>Pseudomonadati</taxon>
        <taxon>Pseudomonadota</taxon>
        <taxon>Gammaproteobacteria</taxon>
        <taxon>Enterobacterales</taxon>
        <taxon>Enterobacteriaceae</taxon>
        <taxon>Shigella</taxon>
    </lineage>
</organism>
<keyword id="KW-0029">Amino-acid transport</keyword>
<keyword id="KW-0997">Cell inner membrane</keyword>
<keyword id="KW-1003">Cell membrane</keyword>
<keyword id="KW-0472">Membrane</keyword>
<keyword id="KW-1185">Reference proteome</keyword>
<keyword id="KW-0812">Transmembrane</keyword>
<keyword id="KW-1133">Transmembrane helix</keyword>
<keyword id="KW-0813">Transport</keyword>
<accession>P64553</accession>
<accession>P76626</accession>
<proteinExistence type="inferred from homology"/>